<comment type="function">
    <text evidence="1">Interacts with the SecY protein in vivo. May bind preferentially to an uncomplexed state of SecY, thus functioning either as a chelating agent for excess SecY in the cell or as a regulatory factor that negatively controls the translocase function.</text>
</comment>
<comment type="subcellular location">
    <subcellularLocation>
        <location evidence="1">Cell inner membrane</location>
        <topology evidence="1">Peripheral membrane protein</topology>
        <orientation evidence="1">Cytoplasmic side</orientation>
    </subcellularLocation>
    <text evidence="1">Loosely associated with the cytoplasmic side of the inner membrane, probably via SecY.</text>
</comment>
<comment type="similarity">
    <text evidence="1">Belongs to the Syd family.</text>
</comment>
<protein>
    <recommendedName>
        <fullName evidence="1">Protein Syd</fullName>
    </recommendedName>
</protein>
<dbReference type="EMBL" id="CP000444">
    <property type="protein sequence ID" value="ABI43712.1"/>
    <property type="molecule type" value="Genomic_DNA"/>
</dbReference>
<dbReference type="SMR" id="Q0HT43"/>
<dbReference type="KEGG" id="shm:Shewmr7_2727"/>
<dbReference type="HOGENOM" id="CLU_121866_0_0_6"/>
<dbReference type="GO" id="GO:0009898">
    <property type="term" value="C:cytoplasmic side of plasma membrane"/>
    <property type="evidence" value="ECO:0007669"/>
    <property type="project" value="InterPro"/>
</dbReference>
<dbReference type="CDD" id="cd16323">
    <property type="entry name" value="Syd"/>
    <property type="match status" value="1"/>
</dbReference>
<dbReference type="Gene3D" id="3.40.1580.20">
    <property type="entry name" value="Syd protein"/>
    <property type="match status" value="1"/>
</dbReference>
<dbReference type="HAMAP" id="MF_01104">
    <property type="entry name" value="Syd"/>
    <property type="match status" value="1"/>
</dbReference>
<dbReference type="InterPro" id="IPR009948">
    <property type="entry name" value="Syd"/>
</dbReference>
<dbReference type="InterPro" id="IPR038228">
    <property type="entry name" value="Syd_sf"/>
</dbReference>
<dbReference type="NCBIfam" id="NF003439">
    <property type="entry name" value="PRK04968.1"/>
    <property type="match status" value="1"/>
</dbReference>
<dbReference type="Pfam" id="PF07348">
    <property type="entry name" value="Syd"/>
    <property type="match status" value="1"/>
</dbReference>
<accession>Q0HT43</accession>
<reference key="1">
    <citation type="submission" date="2006-08" db="EMBL/GenBank/DDBJ databases">
        <title>Complete sequence of chromosome 1 of Shewanella sp. MR-7.</title>
        <authorList>
            <person name="Copeland A."/>
            <person name="Lucas S."/>
            <person name="Lapidus A."/>
            <person name="Barry K."/>
            <person name="Detter J.C."/>
            <person name="Glavina del Rio T."/>
            <person name="Hammon N."/>
            <person name="Israni S."/>
            <person name="Dalin E."/>
            <person name="Tice H."/>
            <person name="Pitluck S."/>
            <person name="Kiss H."/>
            <person name="Brettin T."/>
            <person name="Bruce D."/>
            <person name="Han C."/>
            <person name="Tapia R."/>
            <person name="Gilna P."/>
            <person name="Schmutz J."/>
            <person name="Larimer F."/>
            <person name="Land M."/>
            <person name="Hauser L."/>
            <person name="Kyrpides N."/>
            <person name="Mikhailova N."/>
            <person name="Nealson K."/>
            <person name="Konstantinidis K."/>
            <person name="Klappenbach J."/>
            <person name="Tiedje J."/>
            <person name="Richardson P."/>
        </authorList>
    </citation>
    <scope>NUCLEOTIDE SEQUENCE [LARGE SCALE GENOMIC DNA]</scope>
    <source>
        <strain>MR-7</strain>
    </source>
</reference>
<proteinExistence type="inferred from homology"/>
<feature type="chain" id="PRO_0000298263" description="Protein Syd">
    <location>
        <begin position="1"/>
        <end position="216"/>
    </location>
</feature>
<sequence length="216" mass="24437">MSCLPALDKFLQNYHQSYLSTLGELPRYYPQGEPSLCIQGEFDESSDEAVSWLPVKREQLGSFANVEHALELTLWPDINHFYGEYFAAPVLFDSPWGTGELLQVWNEADFDALQQNIIGHLMMKQKLKQPATWFIGLLDEGDKMLTVDNADGSVWVEIPGELPSTQLAPSLAEFIEALSPRIAPPVKHEELPMPALEHPGIFASFKRMWHNLIGKR</sequence>
<keyword id="KW-0997">Cell inner membrane</keyword>
<keyword id="KW-1003">Cell membrane</keyword>
<keyword id="KW-0472">Membrane</keyword>
<gene>
    <name evidence="1" type="primary">syd</name>
    <name type="ordered locus">Shewmr7_2727</name>
</gene>
<organism>
    <name type="scientific">Shewanella sp. (strain MR-7)</name>
    <dbReference type="NCBI Taxonomy" id="60481"/>
    <lineage>
        <taxon>Bacteria</taxon>
        <taxon>Pseudomonadati</taxon>
        <taxon>Pseudomonadota</taxon>
        <taxon>Gammaproteobacteria</taxon>
        <taxon>Alteromonadales</taxon>
        <taxon>Shewanellaceae</taxon>
        <taxon>Shewanella</taxon>
    </lineage>
</organism>
<evidence type="ECO:0000255" key="1">
    <source>
        <dbReference type="HAMAP-Rule" id="MF_01104"/>
    </source>
</evidence>
<name>SYDP_SHESR</name>